<comment type="function">
    <text evidence="6">Responsible for the deacetylation of lysine residues on the N-terminal part of the core histones (H2A, H2B, H3 and H4). Histone deacetylation gives a tag for epigenetic repression and plays an important role in transcriptional regulation, cell cycle progression and developmental events. May be involved in flowering induction. Histone deacetylases act via the formation of large multiprotein complexes.</text>
</comment>
<comment type="catalytic activity">
    <reaction>
        <text>N(6)-acetyl-L-lysyl-[histone] + H2O = L-lysyl-[histone] + acetate</text>
        <dbReference type="Rhea" id="RHEA:58196"/>
        <dbReference type="Rhea" id="RHEA-COMP:9845"/>
        <dbReference type="Rhea" id="RHEA-COMP:11338"/>
        <dbReference type="ChEBI" id="CHEBI:15377"/>
        <dbReference type="ChEBI" id="CHEBI:29969"/>
        <dbReference type="ChEBI" id="CHEBI:30089"/>
        <dbReference type="ChEBI" id="CHEBI:61930"/>
        <dbReference type="EC" id="3.5.1.98"/>
    </reaction>
</comment>
<comment type="cofactor">
    <cofactor evidence="2">
        <name>Zn(2+)</name>
        <dbReference type="ChEBI" id="CHEBI:29105"/>
    </cofactor>
    <text evidence="2">Binds 1 zinc ion per subunit.</text>
</comment>
<comment type="subcellular location">
    <subcellularLocation>
        <location evidence="1">Nucleus</location>
    </subcellularLocation>
</comment>
<comment type="tissue specificity">
    <text evidence="4">Low expression in flowers.</text>
</comment>
<comment type="similarity">
    <text evidence="5">Belongs to the histone deacetylase family. HD type 1 subfamily.</text>
</comment>
<comment type="sequence caution" evidence="5">
    <conflict type="erroneous termination">
        <sequence resource="EMBL-CDS" id="ABK28721"/>
    </conflict>
    <text>Extended C-terminus.</text>
</comment>
<feature type="chain" id="PRO_0000280086" description="Histone deacetylase 7">
    <location>
        <begin position="1"/>
        <end position="409"/>
    </location>
</feature>
<feature type="region of interest" description="Histone deacetylase">
    <location>
        <begin position="11"/>
        <end position="324"/>
    </location>
</feature>
<feature type="region of interest" description="Disordered" evidence="3">
    <location>
        <begin position="383"/>
        <end position="409"/>
    </location>
</feature>
<feature type="compositionally biased region" description="Polar residues" evidence="3">
    <location>
        <begin position="384"/>
        <end position="394"/>
    </location>
</feature>
<feature type="compositionally biased region" description="Basic and acidic residues" evidence="3">
    <location>
        <begin position="400"/>
        <end position="409"/>
    </location>
</feature>
<feature type="active site" description="Proton donor/acceptor" evidence="2">
    <location>
        <position position="148"/>
    </location>
</feature>
<feature type="binding site" evidence="2">
    <location>
        <position position="267"/>
    </location>
    <ligand>
        <name>Zn(2+)</name>
        <dbReference type="ChEBI" id="CHEBI:29105"/>
    </ligand>
</feature>
<feature type="site" description="Polarizes the scissile carbonyl of the substrate" evidence="2">
    <location>
        <position position="306"/>
    </location>
</feature>
<feature type="strand" evidence="7">
    <location>
        <begin position="12"/>
        <end position="15"/>
    </location>
</feature>
<feature type="helix" evidence="7">
    <location>
        <begin position="20"/>
        <end position="25"/>
    </location>
</feature>
<feature type="helix" evidence="7">
    <location>
        <begin position="35"/>
        <end position="45"/>
    </location>
</feature>
<feature type="helix" evidence="7">
    <location>
        <begin position="48"/>
        <end position="51"/>
    </location>
</feature>
<feature type="strand" evidence="7">
    <location>
        <begin position="52"/>
        <end position="55"/>
    </location>
</feature>
<feature type="helix" evidence="7">
    <location>
        <begin position="62"/>
        <end position="65"/>
    </location>
</feature>
<feature type="turn" evidence="7">
    <location>
        <begin position="66"/>
        <end position="68"/>
    </location>
</feature>
<feature type="helix" evidence="7">
    <location>
        <begin position="71"/>
        <end position="79"/>
    </location>
</feature>
<feature type="helix" evidence="7">
    <location>
        <begin position="82"/>
        <end position="85"/>
    </location>
</feature>
<feature type="helix" evidence="7">
    <location>
        <begin position="90"/>
        <end position="98"/>
    </location>
</feature>
<feature type="strand" evidence="7">
    <location>
        <begin position="104"/>
        <end position="107"/>
    </location>
</feature>
<feature type="helix" evidence="7">
    <location>
        <begin position="108"/>
        <end position="110"/>
    </location>
</feature>
<feature type="helix" evidence="7">
    <location>
        <begin position="113"/>
        <end position="132"/>
    </location>
</feature>
<feature type="strand" evidence="7">
    <location>
        <begin position="137"/>
        <end position="141"/>
    </location>
</feature>
<feature type="strand" evidence="7">
    <location>
        <begin position="158"/>
        <end position="160"/>
    </location>
</feature>
<feature type="helix" evidence="7">
    <location>
        <begin position="162"/>
        <end position="170"/>
    </location>
</feature>
<feature type="turn" evidence="7">
    <location>
        <begin position="171"/>
        <end position="173"/>
    </location>
</feature>
<feature type="strand" evidence="7">
    <location>
        <begin position="177"/>
        <end position="181"/>
    </location>
</feature>
<feature type="strand" evidence="7">
    <location>
        <begin position="183"/>
        <end position="185"/>
    </location>
</feature>
<feature type="helix" evidence="7">
    <location>
        <begin position="188"/>
        <end position="193"/>
    </location>
</feature>
<feature type="turn" evidence="7">
    <location>
        <begin position="194"/>
        <end position="196"/>
    </location>
</feature>
<feature type="strand" evidence="7">
    <location>
        <begin position="198"/>
        <end position="207"/>
    </location>
</feature>
<feature type="helix" evidence="7">
    <location>
        <begin position="220"/>
        <end position="222"/>
    </location>
</feature>
<feature type="strand" evidence="7">
    <location>
        <begin position="226"/>
        <end position="231"/>
    </location>
</feature>
<feature type="helix" evidence="7">
    <location>
        <begin position="237"/>
        <end position="255"/>
    </location>
</feature>
<feature type="strand" evidence="7">
    <location>
        <begin position="258"/>
        <end position="263"/>
    </location>
</feature>
<feature type="helix" evidence="7">
    <location>
        <begin position="266"/>
        <end position="268"/>
    </location>
</feature>
<feature type="helix" evidence="7">
    <location>
        <begin position="281"/>
        <end position="292"/>
    </location>
</feature>
<feature type="strand" evidence="7">
    <location>
        <begin position="298"/>
        <end position="301"/>
    </location>
</feature>
<feature type="helix" evidence="7">
    <location>
        <begin position="308"/>
        <end position="323"/>
    </location>
</feature>
<feature type="helix" evidence="7">
    <location>
        <begin position="337"/>
        <end position="340"/>
    </location>
</feature>
<feature type="turn" evidence="7">
    <location>
        <begin position="341"/>
        <end position="343"/>
    </location>
</feature>
<feature type="strand" evidence="7">
    <location>
        <begin position="345"/>
        <end position="347"/>
    </location>
</feature>
<feature type="helix" evidence="7">
    <location>
        <begin position="359"/>
        <end position="376"/>
    </location>
</feature>
<reference key="1">
    <citation type="journal article" date="2002" name="Nucleic Acids Res.">
        <title>Analysis of histone acetyltransferase and histone deacetylase families of Arabidopsis thaliana suggests functional diversification of chromatin modification among multicellular eukaryotes.</title>
        <authorList>
            <person name="Pandey R."/>
            <person name="Mueller A."/>
            <person name="Napoli C.A."/>
            <person name="Selinger D.A."/>
            <person name="Pikaard C.S."/>
            <person name="Richards E.J."/>
            <person name="Bender J."/>
            <person name="Mount D.W."/>
            <person name="Jorgensen R.A."/>
        </authorList>
    </citation>
    <scope>NUCLEOTIDE SEQUENCE [MRNA]</scope>
    <scope>GENE FAMILY</scope>
    <scope>NOMENCLATURE</scope>
    <source>
        <strain>cv. Columbia</strain>
    </source>
</reference>
<reference key="2">
    <citation type="journal article" date="2000" name="DNA Res.">
        <title>Structural analysis of Arabidopsis thaliana chromosome 5. X. Sequence features of the regions of 3,076,755 bp covered by sixty P1 and TAC clones.</title>
        <authorList>
            <person name="Sato S."/>
            <person name="Nakamura Y."/>
            <person name="Kaneko T."/>
            <person name="Katoh T."/>
            <person name="Asamizu E."/>
            <person name="Kotani H."/>
            <person name="Tabata S."/>
        </authorList>
    </citation>
    <scope>NUCLEOTIDE SEQUENCE [LARGE SCALE GENOMIC DNA]</scope>
    <source>
        <strain>cv. Columbia</strain>
    </source>
</reference>
<reference key="3">
    <citation type="journal article" date="2017" name="Plant J.">
        <title>Araport11: a complete reannotation of the Arabidopsis thaliana reference genome.</title>
        <authorList>
            <person name="Cheng C.Y."/>
            <person name="Krishnakumar V."/>
            <person name="Chan A.P."/>
            <person name="Thibaud-Nissen F."/>
            <person name="Schobel S."/>
            <person name="Town C.D."/>
        </authorList>
    </citation>
    <scope>GENOME REANNOTATION</scope>
    <source>
        <strain>cv. Columbia</strain>
    </source>
</reference>
<reference key="4">
    <citation type="journal article" date="2006" name="Plant Biotechnol. J.">
        <title>Simultaneous high-throughput recombinational cloning of open reading frames in closed and open configurations.</title>
        <authorList>
            <person name="Underwood B.A."/>
            <person name="Vanderhaeghen R."/>
            <person name="Whitford R."/>
            <person name="Town C.D."/>
            <person name="Hilson P."/>
        </authorList>
    </citation>
    <scope>NUCLEOTIDE SEQUENCE [LARGE SCALE MRNA]</scope>
    <source>
        <strain>cv. Columbia</strain>
    </source>
</reference>
<reference key="5">
    <citation type="journal article" date="2006" name="Cell Res.">
        <title>Arabidopsis thaliana histone deacetylase 1 (AtHD1) is localized in euchromatic regions and demonstrates histone deacetylase activity in vitro.</title>
        <authorList>
            <person name="Fong P.M."/>
            <person name="Tian L."/>
            <person name="Chen Z.J."/>
        </authorList>
    </citation>
    <scope>FUNCTION</scope>
    <scope>TISSUE SPECIFICITY</scope>
</reference>
<name>HDA7_ARATH</name>
<proteinExistence type="evidence at protein level"/>
<keyword id="KW-0002">3D-structure</keyword>
<keyword id="KW-0156">Chromatin regulator</keyword>
<keyword id="KW-0378">Hydrolase</keyword>
<keyword id="KW-0479">Metal-binding</keyword>
<keyword id="KW-0539">Nucleus</keyword>
<keyword id="KW-1185">Reference proteome</keyword>
<keyword id="KW-0678">Repressor</keyword>
<keyword id="KW-0804">Transcription</keyword>
<keyword id="KW-0805">Transcription regulation</keyword>
<keyword id="KW-0862">Zinc</keyword>
<evidence type="ECO:0000250" key="1"/>
<evidence type="ECO:0000250" key="2">
    <source>
        <dbReference type="UniProtKB" id="Q8GXJ1"/>
    </source>
</evidence>
<evidence type="ECO:0000256" key="3">
    <source>
        <dbReference type="SAM" id="MobiDB-lite"/>
    </source>
</evidence>
<evidence type="ECO:0000269" key="4">
    <source>
    </source>
</evidence>
<evidence type="ECO:0000305" key="5"/>
<evidence type="ECO:0000305" key="6">
    <source>
    </source>
</evidence>
<evidence type="ECO:0007829" key="7">
    <source>
        <dbReference type="PDB" id="8WZL"/>
    </source>
</evidence>
<protein>
    <recommendedName>
        <fullName>Histone deacetylase 7</fullName>
        <ecNumber>3.5.1.98</ecNumber>
    </recommendedName>
</protein>
<dbReference type="EC" id="3.5.1.98"/>
<dbReference type="EMBL" id="AF510166">
    <property type="protein sequence ID" value="AAM49768.1"/>
    <property type="molecule type" value="mRNA"/>
</dbReference>
<dbReference type="EMBL" id="AB023031">
    <property type="protein sequence ID" value="BAB09994.1"/>
    <property type="molecule type" value="Genomic_DNA"/>
</dbReference>
<dbReference type="EMBL" id="CP002688">
    <property type="protein sequence ID" value="AED93985.1"/>
    <property type="molecule type" value="Genomic_DNA"/>
</dbReference>
<dbReference type="EMBL" id="DQ447001">
    <property type="protein sequence ID" value="ABE66192.1"/>
    <property type="molecule type" value="mRNA"/>
</dbReference>
<dbReference type="EMBL" id="DQ653319">
    <property type="protein sequence ID" value="ABK28721.1"/>
    <property type="status" value="ALT_SEQ"/>
    <property type="molecule type" value="mRNA"/>
</dbReference>
<dbReference type="RefSeq" id="NP_198410.1">
    <property type="nucleotide sequence ID" value="NM_122951.1"/>
</dbReference>
<dbReference type="PDB" id="8WZL">
    <property type="method" value="X-ray"/>
    <property type="resolution" value="1.50 A"/>
    <property type="chains" value="A=8-383"/>
</dbReference>
<dbReference type="PDBsum" id="8WZL"/>
<dbReference type="SASBDB" id="Q9FH09"/>
<dbReference type="SMR" id="Q9FH09"/>
<dbReference type="STRING" id="3702.Q9FH09"/>
<dbReference type="PaxDb" id="3702-AT5G35600.1"/>
<dbReference type="ProteomicsDB" id="230311"/>
<dbReference type="EnsemblPlants" id="AT5G35600.1">
    <property type="protein sequence ID" value="AT5G35600.1"/>
    <property type="gene ID" value="AT5G35600"/>
</dbReference>
<dbReference type="GeneID" id="833525"/>
<dbReference type="Gramene" id="AT5G35600.1">
    <property type="protein sequence ID" value="AT5G35600.1"/>
    <property type="gene ID" value="AT5G35600"/>
</dbReference>
<dbReference type="KEGG" id="ath:AT5G35600"/>
<dbReference type="Araport" id="AT5G35600"/>
<dbReference type="TAIR" id="AT5G35600">
    <property type="gene designation" value="HDA7"/>
</dbReference>
<dbReference type="eggNOG" id="KOG1342">
    <property type="taxonomic scope" value="Eukaryota"/>
</dbReference>
<dbReference type="HOGENOM" id="CLU_007727_7_4_1"/>
<dbReference type="InParanoid" id="Q9FH09"/>
<dbReference type="OMA" id="HESVVQS"/>
<dbReference type="OrthoDB" id="1022277at2759"/>
<dbReference type="PhylomeDB" id="Q9FH09"/>
<dbReference type="PRO" id="PR:Q9FH09"/>
<dbReference type="Proteomes" id="UP000006548">
    <property type="component" value="Chromosome 5"/>
</dbReference>
<dbReference type="ExpressionAtlas" id="Q9FH09">
    <property type="expression patterns" value="baseline and differential"/>
</dbReference>
<dbReference type="GO" id="GO:0005634">
    <property type="term" value="C:nucleus"/>
    <property type="evidence" value="ECO:0007669"/>
    <property type="project" value="UniProtKB-SubCell"/>
</dbReference>
<dbReference type="GO" id="GO:0141221">
    <property type="term" value="F:histone deacetylase activity, hydrolytic mechanism"/>
    <property type="evidence" value="ECO:0007669"/>
    <property type="project" value="UniProtKB-EC"/>
</dbReference>
<dbReference type="GO" id="GO:0008270">
    <property type="term" value="F:zinc ion binding"/>
    <property type="evidence" value="ECO:0000250"/>
    <property type="project" value="UniProtKB"/>
</dbReference>
<dbReference type="GO" id="GO:0006325">
    <property type="term" value="P:chromatin organization"/>
    <property type="evidence" value="ECO:0007669"/>
    <property type="project" value="UniProtKB-KW"/>
</dbReference>
<dbReference type="GO" id="GO:0009793">
    <property type="term" value="P:embryo development ending in seed dormancy"/>
    <property type="evidence" value="ECO:0000315"/>
    <property type="project" value="TAIR"/>
</dbReference>
<dbReference type="GO" id="GO:0009553">
    <property type="term" value="P:embryo sac development"/>
    <property type="evidence" value="ECO:0000315"/>
    <property type="project" value="TAIR"/>
</dbReference>
<dbReference type="GO" id="GO:0009845">
    <property type="term" value="P:seed germination"/>
    <property type="evidence" value="ECO:0000315"/>
    <property type="project" value="TAIR"/>
</dbReference>
<dbReference type="CDD" id="cd09991">
    <property type="entry name" value="HDAC_classI"/>
    <property type="match status" value="1"/>
</dbReference>
<dbReference type="Gene3D" id="3.40.800.20">
    <property type="entry name" value="Histone deacetylase domain"/>
    <property type="match status" value="1"/>
</dbReference>
<dbReference type="InterPro" id="IPR050284">
    <property type="entry name" value="HDAC_PDAC"/>
</dbReference>
<dbReference type="InterPro" id="IPR000286">
    <property type="entry name" value="His_deacetylse"/>
</dbReference>
<dbReference type="InterPro" id="IPR003084">
    <property type="entry name" value="His_deacetylse_1"/>
</dbReference>
<dbReference type="InterPro" id="IPR023801">
    <property type="entry name" value="His_deacetylse_dom"/>
</dbReference>
<dbReference type="InterPro" id="IPR037138">
    <property type="entry name" value="His_deacetylse_dom_sf"/>
</dbReference>
<dbReference type="InterPro" id="IPR023696">
    <property type="entry name" value="Ureohydrolase_dom_sf"/>
</dbReference>
<dbReference type="PANTHER" id="PTHR10625:SF48">
    <property type="entry name" value="HISTONE DEACETYLASE 7"/>
    <property type="match status" value="1"/>
</dbReference>
<dbReference type="PANTHER" id="PTHR10625">
    <property type="entry name" value="HISTONE DEACETYLASE HDAC1-RELATED"/>
    <property type="match status" value="1"/>
</dbReference>
<dbReference type="Pfam" id="PF00850">
    <property type="entry name" value="Hist_deacetyl"/>
    <property type="match status" value="1"/>
</dbReference>
<dbReference type="PIRSF" id="PIRSF037913">
    <property type="entry name" value="His_deacetylse_1"/>
    <property type="match status" value="1"/>
</dbReference>
<dbReference type="PRINTS" id="PR01270">
    <property type="entry name" value="HDASUPER"/>
</dbReference>
<dbReference type="PRINTS" id="PR01271">
    <property type="entry name" value="HISDACETLASE"/>
</dbReference>
<dbReference type="SUPFAM" id="SSF52768">
    <property type="entry name" value="Arginase/deacetylase"/>
    <property type="match status" value="1"/>
</dbReference>
<sequence length="409" mass="46017">MASLADGGKRRVSYFYEPMIGDYYYGVNQPTKPQRIRVTHNLILSYNLHRHMEINHPDLADASDFEKFHSLEYINFLKSVTPETVTDPHPSVSENLKRFNVDVDWDGPVFHNLFDYCRAYAGGSISAAAKLNRQEADIAINWAGGMHHVKKDKASGFGYVNDVVLAILELLKSFKRVLYIEIGFPHGDEVEEAFKDTDRVMTVSFHKVGDTGDISDYGEGKGQYYSLNAPLKDGLDDFSLRGLFIPVIHRAMEIYEPEVIVLQCGADSLAGDPFGTFNLSIKGHGDCLQYVRSFNVPLMILGGGGYTLPNVARCWCYETAIAVGEQLDNDLPGNDYMKYFRPDYKLHILPTNRQNLNTRLDIITMRETLLAQLSLVMHAPSVPFQDTPSSSQATEAAEVDMEKRNDPRI</sequence>
<accession>Q9FH09</accession>
<accession>A0MFJ3</accession>
<gene>
    <name type="primary">HDA7</name>
    <name type="ordered locus">At5g35600</name>
    <name type="ORF">K2K18.5</name>
</gene>
<organism>
    <name type="scientific">Arabidopsis thaliana</name>
    <name type="common">Mouse-ear cress</name>
    <dbReference type="NCBI Taxonomy" id="3702"/>
    <lineage>
        <taxon>Eukaryota</taxon>
        <taxon>Viridiplantae</taxon>
        <taxon>Streptophyta</taxon>
        <taxon>Embryophyta</taxon>
        <taxon>Tracheophyta</taxon>
        <taxon>Spermatophyta</taxon>
        <taxon>Magnoliopsida</taxon>
        <taxon>eudicotyledons</taxon>
        <taxon>Gunneridae</taxon>
        <taxon>Pentapetalae</taxon>
        <taxon>rosids</taxon>
        <taxon>malvids</taxon>
        <taxon>Brassicales</taxon>
        <taxon>Brassicaceae</taxon>
        <taxon>Camelineae</taxon>
        <taxon>Arabidopsis</taxon>
    </lineage>
</organism>